<comment type="function">
    <text evidence="1">Probably participates in a plant defense mechanism.</text>
</comment>
<comment type="tissue specificity">
    <text evidence="2">Expressed in fruit, pedicel, stem and root but not in leaf (at protein level).</text>
</comment>
<comment type="domain">
    <text evidence="4">The presence of a 'disulfide through disulfide knot' structurally defines this protein as a knottin.</text>
</comment>
<comment type="PTM">
    <text evidence="1 2">This is a cyclic peptide.</text>
</comment>
<comment type="mass spectrometry" mass="3165.0" method="MALDI" evidence="2"/>
<comment type="similarity">
    <text evidence="1">Belongs to the cyclotide family. Bracelet subfamily.</text>
</comment>
<comment type="caution">
    <text evidence="4">This peptide is cyclic. The start position was chosen by similarity to chassatide C8 for which the DNA sequence is known.</text>
</comment>
<name>CYC3_CHACT</name>
<feature type="peptide" id="PRO_0000440223" description="Chassatide C3" evidence="2">
    <location>
        <begin position="1"/>
        <end position="30"/>
    </location>
</feature>
<feature type="disulfide bond" evidence="1">
    <location>
        <begin position="4"/>
        <end position="20"/>
    </location>
</feature>
<feature type="disulfide bond" evidence="1">
    <location>
        <begin position="8"/>
        <end position="22"/>
    </location>
</feature>
<feature type="disulfide bond" evidence="1">
    <location>
        <begin position="13"/>
        <end position="27"/>
    </location>
</feature>
<feature type="cross-link" description="Cyclopeptide (Gly-Asn)" evidence="2">
    <location>
        <begin position="1"/>
        <end position="30"/>
    </location>
</feature>
<sequence length="30" mass="3192">GIPCGESCVWIPCISSALGCSCKNKVCYRN</sequence>
<organism evidence="3">
    <name type="scientific">Chassalia chartacea</name>
    <name type="common">Chassalia curviflora</name>
    <dbReference type="NCBI Taxonomy" id="510798"/>
    <lineage>
        <taxon>Eukaryota</taxon>
        <taxon>Viridiplantae</taxon>
        <taxon>Streptophyta</taxon>
        <taxon>Embryophyta</taxon>
        <taxon>Tracheophyta</taxon>
        <taxon>Spermatophyta</taxon>
        <taxon>Magnoliopsida</taxon>
        <taxon>eudicotyledons</taxon>
        <taxon>Gunneridae</taxon>
        <taxon>Pentapetalae</taxon>
        <taxon>asterids</taxon>
        <taxon>lamiids</taxon>
        <taxon>Gentianales</taxon>
        <taxon>Rubiaceae</taxon>
        <taxon>Rubioideae</taxon>
        <taxon>Palicoureeae</taxon>
        <taxon>Chassalia</taxon>
    </lineage>
</organism>
<protein>
    <recommendedName>
        <fullName evidence="3">Chassatide C3</fullName>
    </recommendedName>
    <alternativeName>
        <fullName evidence="3">Cyclotide chaC3</fullName>
    </alternativeName>
</protein>
<accession>C0HKH3</accession>
<evidence type="ECO:0000255" key="1">
    <source>
        <dbReference type="PROSITE-ProRule" id="PRU00395"/>
    </source>
</evidence>
<evidence type="ECO:0000269" key="2">
    <source>
    </source>
</evidence>
<evidence type="ECO:0000303" key="3">
    <source>
    </source>
</evidence>
<evidence type="ECO:0000305" key="4"/>
<dbReference type="SMR" id="C0HKH3"/>
<dbReference type="GO" id="GO:0006952">
    <property type="term" value="P:defense response"/>
    <property type="evidence" value="ECO:0007669"/>
    <property type="project" value="UniProtKB-KW"/>
</dbReference>
<dbReference type="InterPro" id="IPR005535">
    <property type="entry name" value="Cyclotide"/>
</dbReference>
<dbReference type="InterPro" id="IPR012323">
    <property type="entry name" value="Cyclotide_bracelet_CS"/>
</dbReference>
<dbReference type="InterPro" id="IPR036146">
    <property type="entry name" value="Cyclotide_sf"/>
</dbReference>
<dbReference type="Pfam" id="PF03784">
    <property type="entry name" value="Cyclotide"/>
    <property type="match status" value="1"/>
</dbReference>
<dbReference type="PIRSF" id="PIRSF037891">
    <property type="entry name" value="Cycloviolacin"/>
    <property type="match status" value="1"/>
</dbReference>
<dbReference type="SUPFAM" id="SSF57038">
    <property type="entry name" value="Cyclotides"/>
    <property type="match status" value="1"/>
</dbReference>
<dbReference type="PROSITE" id="PS51052">
    <property type="entry name" value="CYCLOTIDE"/>
    <property type="match status" value="1"/>
</dbReference>
<dbReference type="PROSITE" id="PS60008">
    <property type="entry name" value="CYCLOTIDE_BRACELET"/>
    <property type="match status" value="1"/>
</dbReference>
<reference evidence="4" key="1">
    <citation type="journal article" date="2012" name="J. Biol. Chem.">
        <title>Novel Cyclotides and Uncyclotides with Highly Shortened Precursors from Chassalia chartacea and Effects of Methionine Oxidation on Bioactivities.</title>
        <authorList>
            <person name="Nguyen G.K."/>
            <person name="Lim W.H."/>
            <person name="Nguyen P.Q."/>
            <person name="Tam J.P."/>
        </authorList>
    </citation>
    <scope>PROTEIN SEQUENCE</scope>
    <scope>TISSUE SPECIFICITY</scope>
    <scope>MASS SPECTROMETRY</scope>
    <scope>IDENTIFICATION BY MASS SPECTROMETRY</scope>
</reference>
<proteinExistence type="evidence at protein level"/>
<keyword id="KW-0903">Direct protein sequencing</keyword>
<keyword id="KW-1015">Disulfide bond</keyword>
<keyword id="KW-0960">Knottin</keyword>
<keyword id="KW-0611">Plant defense</keyword>